<evidence type="ECO:0000255" key="1">
    <source>
        <dbReference type="HAMAP-Rule" id="MF_00911"/>
    </source>
</evidence>
<evidence type="ECO:0000255" key="2">
    <source>
        <dbReference type="PROSITE-ProRule" id="PRU01115"/>
    </source>
</evidence>
<evidence type="ECO:0000305" key="3"/>
<sequence>MLALRGRRGKRVRYPADGVAEADEAFVLPRPLRRGVRFLISLGAGRIRFPNHTGTVAAAAFMVATGLYGMSLGGHTQSFAQVSTTAAGFAIEDVRVSGNAQTSEIDILQQLGLDGTTSLVALDIEEARRLIGELPWVETVTVRKVYPGTIEVVLKEREAFGIWQHGSDLSLIERSGSVIAPLRDNKFASLPLFVGRDAETAAAAFYDEFSRWPEFRSRVKAFVRVAGRRWDLRLNNGVVVKLPEKDVARAMSVLAGMQDTHQLLERDIAAVDLRLEDRTTVQLTPEAVKRREVALKAREKMLKAQEKRI</sequence>
<feature type="chain" id="PRO_0000160584" description="Cell division protein FtsQ">
    <location>
        <begin position="1"/>
        <end position="309"/>
    </location>
</feature>
<feature type="topological domain" description="Cytoplasmic" evidence="1">
    <location>
        <begin position="1"/>
        <end position="52"/>
    </location>
</feature>
<feature type="transmembrane region" description="Helical" evidence="1">
    <location>
        <begin position="53"/>
        <end position="74"/>
    </location>
</feature>
<feature type="topological domain" description="Periplasmic" evidence="1">
    <location>
        <begin position="75"/>
        <end position="309"/>
    </location>
</feature>
<feature type="domain" description="POTRA" evidence="2">
    <location>
        <begin position="89"/>
        <end position="157"/>
    </location>
</feature>
<comment type="function">
    <text evidence="1">Essential cell division protein.</text>
</comment>
<comment type="subcellular location">
    <subcellularLocation>
        <location evidence="1">Cell inner membrane</location>
        <topology evidence="1">Single-pass type II membrane protein</topology>
    </subcellularLocation>
    <text evidence="1">Localizes to the division septum.</text>
</comment>
<comment type="similarity">
    <text evidence="1">Belongs to the FtsQ/DivIB family. FtsQ subfamily.</text>
</comment>
<comment type="sequence caution" evidence="3">
    <conflict type="erroneous initiation">
        <sequence resource="EMBL-CDS" id="AAC45822"/>
    </conflict>
    <text>Truncated N-terminus.</text>
</comment>
<keyword id="KW-0131">Cell cycle</keyword>
<keyword id="KW-0132">Cell division</keyword>
<keyword id="KW-0997">Cell inner membrane</keyword>
<keyword id="KW-1003">Cell membrane</keyword>
<keyword id="KW-0472">Membrane</keyword>
<keyword id="KW-1185">Reference proteome</keyword>
<keyword id="KW-0812">Transmembrane</keyword>
<keyword id="KW-1133">Transmembrane helix</keyword>
<protein>
    <recommendedName>
        <fullName evidence="1">Cell division protein FtsQ</fullName>
    </recommendedName>
</protein>
<accession>O30993</accession>
<reference key="1">
    <citation type="journal article" date="1997" name="J. Bacteriol.">
        <title>Interactions between heterologous FtsA and FtsZ proteins at the FtsZ ring.</title>
        <authorList>
            <person name="Ma X."/>
            <person name="Sun Q."/>
            <person name="Wang R."/>
            <person name="Singh G."/>
            <person name="Jonietz E.L."/>
            <person name="Margolin W."/>
        </authorList>
    </citation>
    <scope>NUCLEOTIDE SEQUENCE [GENOMIC DNA]</scope>
    <source>
        <strain>1021</strain>
    </source>
</reference>
<reference key="2">
    <citation type="journal article" date="2001" name="Proc. Natl. Acad. Sci. U.S.A.">
        <title>Analysis of the chromosome sequence of the legume symbiont Sinorhizobium meliloti strain 1021.</title>
        <authorList>
            <person name="Capela D."/>
            <person name="Barloy-Hubler F."/>
            <person name="Gouzy J."/>
            <person name="Bothe G."/>
            <person name="Ampe F."/>
            <person name="Batut J."/>
            <person name="Boistard P."/>
            <person name="Becker A."/>
            <person name="Boutry M."/>
            <person name="Cadieu E."/>
            <person name="Dreano S."/>
            <person name="Gloux S."/>
            <person name="Godrie T."/>
            <person name="Goffeau A."/>
            <person name="Kahn D."/>
            <person name="Kiss E."/>
            <person name="Lelaure V."/>
            <person name="Masuy D."/>
            <person name="Pohl T."/>
            <person name="Portetelle D."/>
            <person name="Puehler A."/>
            <person name="Purnelle B."/>
            <person name="Ramsperger U."/>
            <person name="Renard C."/>
            <person name="Thebault P."/>
            <person name="Vandenbol M."/>
            <person name="Weidner S."/>
            <person name="Galibert F."/>
        </authorList>
    </citation>
    <scope>NUCLEOTIDE SEQUENCE [LARGE SCALE GENOMIC DNA]</scope>
    <source>
        <strain>1021</strain>
    </source>
</reference>
<reference key="3">
    <citation type="journal article" date="2001" name="Science">
        <title>The composite genome of the legume symbiont Sinorhizobium meliloti.</title>
        <authorList>
            <person name="Galibert F."/>
            <person name="Finan T.M."/>
            <person name="Long S.R."/>
            <person name="Puehler A."/>
            <person name="Abola P."/>
            <person name="Ampe F."/>
            <person name="Barloy-Hubler F."/>
            <person name="Barnett M.J."/>
            <person name="Becker A."/>
            <person name="Boistard P."/>
            <person name="Bothe G."/>
            <person name="Boutry M."/>
            <person name="Bowser L."/>
            <person name="Buhrmester J."/>
            <person name="Cadieu E."/>
            <person name="Capela D."/>
            <person name="Chain P."/>
            <person name="Cowie A."/>
            <person name="Davis R.W."/>
            <person name="Dreano S."/>
            <person name="Federspiel N.A."/>
            <person name="Fisher R.F."/>
            <person name="Gloux S."/>
            <person name="Godrie T."/>
            <person name="Goffeau A."/>
            <person name="Golding B."/>
            <person name="Gouzy J."/>
            <person name="Gurjal M."/>
            <person name="Hernandez-Lucas I."/>
            <person name="Hong A."/>
            <person name="Huizar L."/>
            <person name="Hyman R.W."/>
            <person name="Jones T."/>
            <person name="Kahn D."/>
            <person name="Kahn M.L."/>
            <person name="Kalman S."/>
            <person name="Keating D.H."/>
            <person name="Kiss E."/>
            <person name="Komp C."/>
            <person name="Lelaure V."/>
            <person name="Masuy D."/>
            <person name="Palm C."/>
            <person name="Peck M.C."/>
            <person name="Pohl T.M."/>
            <person name="Portetelle D."/>
            <person name="Purnelle B."/>
            <person name="Ramsperger U."/>
            <person name="Surzycki R."/>
            <person name="Thebault P."/>
            <person name="Vandenbol M."/>
            <person name="Vorhoelter F.J."/>
            <person name="Weidner S."/>
            <person name="Wells D.H."/>
            <person name="Wong K."/>
            <person name="Yeh K.-C."/>
            <person name="Batut J."/>
        </authorList>
    </citation>
    <scope>NUCLEOTIDE SEQUENCE [LARGE SCALE GENOMIC DNA]</scope>
    <source>
        <strain>1021</strain>
    </source>
</reference>
<organism>
    <name type="scientific">Rhizobium meliloti (strain 1021)</name>
    <name type="common">Ensifer meliloti</name>
    <name type="synonym">Sinorhizobium meliloti</name>
    <dbReference type="NCBI Taxonomy" id="266834"/>
    <lineage>
        <taxon>Bacteria</taxon>
        <taxon>Pseudomonadati</taxon>
        <taxon>Pseudomonadota</taxon>
        <taxon>Alphaproteobacteria</taxon>
        <taxon>Hyphomicrobiales</taxon>
        <taxon>Rhizobiaceae</taxon>
        <taxon>Sinorhizobium/Ensifer group</taxon>
        <taxon>Sinorhizobium</taxon>
    </lineage>
</organism>
<dbReference type="EMBL" id="AF024660">
    <property type="protein sequence ID" value="AAC45822.1"/>
    <property type="status" value="ALT_INIT"/>
    <property type="molecule type" value="Genomic_DNA"/>
</dbReference>
<dbReference type="EMBL" id="AL591688">
    <property type="protein sequence ID" value="CAC46749.1"/>
    <property type="molecule type" value="Genomic_DNA"/>
</dbReference>
<dbReference type="RefSeq" id="NP_386276.1">
    <property type="nucleotide sequence ID" value="NC_003047.1"/>
</dbReference>
<dbReference type="RefSeq" id="WP_010969743.1">
    <property type="nucleotide sequence ID" value="NC_003047.1"/>
</dbReference>
<dbReference type="SMR" id="O30993"/>
<dbReference type="EnsemblBacteria" id="CAC46749">
    <property type="protein sequence ID" value="CAC46749"/>
    <property type="gene ID" value="SMc01872"/>
</dbReference>
<dbReference type="KEGG" id="sme:SMc01872"/>
<dbReference type="PATRIC" id="fig|266834.11.peg.3636"/>
<dbReference type="eggNOG" id="COG1589">
    <property type="taxonomic scope" value="Bacteria"/>
</dbReference>
<dbReference type="HOGENOM" id="CLU_061141_2_0_5"/>
<dbReference type="OrthoDB" id="9783091at2"/>
<dbReference type="Proteomes" id="UP000001976">
    <property type="component" value="Chromosome"/>
</dbReference>
<dbReference type="GO" id="GO:0032153">
    <property type="term" value="C:cell division site"/>
    <property type="evidence" value="ECO:0007669"/>
    <property type="project" value="UniProtKB-UniRule"/>
</dbReference>
<dbReference type="GO" id="GO:0005886">
    <property type="term" value="C:plasma membrane"/>
    <property type="evidence" value="ECO:0007669"/>
    <property type="project" value="UniProtKB-SubCell"/>
</dbReference>
<dbReference type="GO" id="GO:0090529">
    <property type="term" value="P:cell septum assembly"/>
    <property type="evidence" value="ECO:0007669"/>
    <property type="project" value="InterPro"/>
</dbReference>
<dbReference type="GO" id="GO:0043093">
    <property type="term" value="P:FtsZ-dependent cytokinesis"/>
    <property type="evidence" value="ECO:0007669"/>
    <property type="project" value="UniProtKB-UniRule"/>
</dbReference>
<dbReference type="Gene3D" id="3.40.50.11690">
    <property type="entry name" value="Cell division protein FtsQ/DivIB"/>
    <property type="match status" value="1"/>
</dbReference>
<dbReference type="Gene3D" id="3.10.20.310">
    <property type="entry name" value="membrane protein fhac"/>
    <property type="match status" value="1"/>
</dbReference>
<dbReference type="HAMAP" id="MF_00911">
    <property type="entry name" value="FtsQ_subfam"/>
    <property type="match status" value="1"/>
</dbReference>
<dbReference type="InterPro" id="IPR005548">
    <property type="entry name" value="Cell_div_FtsQ/DivIB_C"/>
</dbReference>
<dbReference type="InterPro" id="IPR026579">
    <property type="entry name" value="FtsQ"/>
</dbReference>
<dbReference type="InterPro" id="IPR045335">
    <property type="entry name" value="FtsQ_C_sf"/>
</dbReference>
<dbReference type="InterPro" id="IPR034746">
    <property type="entry name" value="POTRA"/>
</dbReference>
<dbReference type="InterPro" id="IPR013685">
    <property type="entry name" value="POTRA_FtsQ_type"/>
</dbReference>
<dbReference type="PANTHER" id="PTHR35851">
    <property type="entry name" value="CELL DIVISION PROTEIN FTSQ"/>
    <property type="match status" value="1"/>
</dbReference>
<dbReference type="PANTHER" id="PTHR35851:SF1">
    <property type="entry name" value="CELL DIVISION PROTEIN FTSQ"/>
    <property type="match status" value="1"/>
</dbReference>
<dbReference type="Pfam" id="PF03799">
    <property type="entry name" value="FtsQ_DivIB_C"/>
    <property type="match status" value="1"/>
</dbReference>
<dbReference type="Pfam" id="PF08478">
    <property type="entry name" value="POTRA_1"/>
    <property type="match status" value="1"/>
</dbReference>
<dbReference type="PROSITE" id="PS51779">
    <property type="entry name" value="POTRA"/>
    <property type="match status" value="1"/>
</dbReference>
<proteinExistence type="inferred from homology"/>
<gene>
    <name evidence="1" type="primary">ftsQ</name>
    <name type="ordered locus">R02170</name>
    <name type="ORF">SMc01872</name>
</gene>
<name>FTSQ_RHIME</name>